<sequence length="59" mass="6410">MAKKPGENTGKNGGIYQEVGPRGGKKDNFATVKDNERLPPTTKPGNGWVLDKRTPDSKK</sequence>
<organism>
    <name type="scientific">Salmonella phage P22</name>
    <name type="common">Bacteriophage P22</name>
    <dbReference type="NCBI Taxonomy" id="10754"/>
    <lineage>
        <taxon>Viruses</taxon>
        <taxon>Duplodnaviria</taxon>
        <taxon>Heunggongvirae</taxon>
        <taxon>Uroviricota</taxon>
        <taxon>Caudoviricetes</taxon>
        <taxon>Lederbergvirus</taxon>
    </lineage>
</organism>
<organismHost>
    <name type="scientific">Salmonella typhimurium</name>
    <dbReference type="NCBI Taxonomy" id="90371"/>
</organismHost>
<proteinExistence type="predicted"/>
<reference key="1">
    <citation type="journal article" date="2000" name="J. Bacteriol.">
        <title>Sequence of the genome of Salmonella bacteriophage P22.</title>
        <authorList>
            <person name="Vander Byl C.S."/>
            <person name="Kropinski A.M.B."/>
        </authorList>
    </citation>
    <scope>NUCLEOTIDE SEQUENCE [LARGE SCALE GENOMIC DNA]</scope>
</reference>
<reference key="2">
    <citation type="journal article" date="2003" name="J. Bacteriol.">
        <title>Corrected sequence of the bacteriophage P22 genome.</title>
        <authorList>
            <person name="Pedulla M.L."/>
            <person name="Ford M.E."/>
            <person name="Karthikeyan T."/>
            <person name="Houtz J.M."/>
            <person name="Hendrix R.W."/>
            <person name="Hatfull G.F."/>
            <person name="Poteete A.R."/>
            <person name="Gilcrease E.B."/>
            <person name="Winn-Stapley D.A."/>
            <person name="Casjens S.R."/>
        </authorList>
    </citation>
    <scope>NUCLEOTIDE SEQUENCE [LARGE SCALE GENOMIC DNA]</scope>
</reference>
<keyword id="KW-1185">Reference proteome</keyword>
<protein>
    <recommendedName>
        <fullName>Uncharacterized 6.4 kDa protein in sieA-mnt intergenic region</fullName>
    </recommendedName>
    <alternativeName>
        <fullName>ORF59A</fullName>
    </alternativeName>
</protein>
<accession>P57017</accession>
<accession>Q7PCH5</accession>
<dbReference type="EMBL" id="AF217253">
    <property type="protein sequence ID" value="AAF75062.1"/>
    <property type="molecule type" value="Genomic_DNA"/>
</dbReference>
<dbReference type="EMBL" id="BK000583">
    <property type="protein sequence ID" value="DAA00997.1"/>
    <property type="molecule type" value="Genomic_DNA"/>
</dbReference>
<dbReference type="RefSeq" id="NP_059640.1">
    <property type="nucleotide sequence ID" value="NC_002371.2"/>
</dbReference>
<dbReference type="GeneID" id="1262839"/>
<dbReference type="KEGG" id="vg:1262839"/>
<dbReference type="Proteomes" id="UP000001795">
    <property type="component" value="Segment"/>
</dbReference>
<dbReference type="Proteomes" id="UP000007960">
    <property type="component" value="Segment"/>
</dbReference>
<evidence type="ECO:0000256" key="1">
    <source>
        <dbReference type="SAM" id="MobiDB-lite"/>
    </source>
</evidence>
<name>Y6K4_BPP22</name>
<feature type="chain" id="PRO_0000077777" description="Uncharacterized 6.4 kDa protein in sieA-mnt intergenic region">
    <location>
        <begin position="1"/>
        <end position="59"/>
    </location>
</feature>
<feature type="region of interest" description="Disordered" evidence="1">
    <location>
        <begin position="1"/>
        <end position="59"/>
    </location>
</feature>
<feature type="compositionally biased region" description="Basic and acidic residues" evidence="1">
    <location>
        <begin position="24"/>
        <end position="37"/>
    </location>
</feature>
<feature type="compositionally biased region" description="Basic and acidic residues" evidence="1">
    <location>
        <begin position="50"/>
        <end position="59"/>
    </location>
</feature>